<evidence type="ECO:0000250" key="1"/>
<evidence type="ECO:0000255" key="2">
    <source>
        <dbReference type="HAMAP-Rule" id="MF_00118"/>
    </source>
</evidence>
<organism>
    <name type="scientific">Ralstonia nicotianae (strain ATCC BAA-1114 / GMI1000)</name>
    <name type="common">Ralstonia solanacearum</name>
    <dbReference type="NCBI Taxonomy" id="267608"/>
    <lineage>
        <taxon>Bacteria</taxon>
        <taxon>Pseudomonadati</taxon>
        <taxon>Pseudomonadota</taxon>
        <taxon>Betaproteobacteria</taxon>
        <taxon>Burkholderiales</taxon>
        <taxon>Burkholderiaceae</taxon>
        <taxon>Ralstonia</taxon>
        <taxon>Ralstonia solanacearum species complex</taxon>
    </lineage>
</organism>
<accession>Q8XGZ0</accession>
<comment type="function">
    <text evidence="2">GTP hydrolase that promotes the GTP-dependent binding of aminoacyl-tRNA to the A-site of ribosomes during protein biosynthesis.</text>
</comment>
<comment type="catalytic activity">
    <reaction evidence="2">
        <text>GTP + H2O = GDP + phosphate + H(+)</text>
        <dbReference type="Rhea" id="RHEA:19669"/>
        <dbReference type="ChEBI" id="CHEBI:15377"/>
        <dbReference type="ChEBI" id="CHEBI:15378"/>
        <dbReference type="ChEBI" id="CHEBI:37565"/>
        <dbReference type="ChEBI" id="CHEBI:43474"/>
        <dbReference type="ChEBI" id="CHEBI:58189"/>
        <dbReference type="EC" id="3.6.5.3"/>
    </reaction>
    <physiologicalReaction direction="left-to-right" evidence="2">
        <dbReference type="Rhea" id="RHEA:19670"/>
    </physiologicalReaction>
</comment>
<comment type="subunit">
    <text evidence="2">Monomer.</text>
</comment>
<comment type="subcellular location">
    <subcellularLocation>
        <location evidence="2">Cytoplasm</location>
    </subcellularLocation>
</comment>
<comment type="similarity">
    <text evidence="2">Belongs to the TRAFAC class translation factor GTPase superfamily. Classic translation factor GTPase family. EF-Tu/EF-1A subfamily.</text>
</comment>
<dbReference type="EC" id="3.6.5.3" evidence="2"/>
<dbReference type="EMBL" id="AL646052">
    <property type="protein sequence ID" value="CAD16730.1"/>
    <property type="molecule type" value="Genomic_DNA"/>
</dbReference>
<dbReference type="EMBL" id="AL646052">
    <property type="protein sequence ID" value="CAD16750.1"/>
    <property type="molecule type" value="Genomic_DNA"/>
</dbReference>
<dbReference type="SMR" id="Q8XGZ0"/>
<dbReference type="STRING" id="267608.RSc3021"/>
<dbReference type="EnsemblBacteria" id="CAD16730">
    <property type="protein sequence ID" value="CAD16730"/>
    <property type="gene ID" value="RSc3021"/>
</dbReference>
<dbReference type="EnsemblBacteria" id="CAD16750">
    <property type="protein sequence ID" value="CAD16750"/>
    <property type="gene ID" value="RSc3041"/>
</dbReference>
<dbReference type="KEGG" id="rso:RSc3021"/>
<dbReference type="KEGG" id="rso:RSc3041"/>
<dbReference type="eggNOG" id="COG0050">
    <property type="taxonomic scope" value="Bacteria"/>
</dbReference>
<dbReference type="HOGENOM" id="CLU_007265_0_0_4"/>
<dbReference type="Proteomes" id="UP000001436">
    <property type="component" value="Chromosome"/>
</dbReference>
<dbReference type="GO" id="GO:0005737">
    <property type="term" value="C:cytoplasm"/>
    <property type="evidence" value="ECO:0007669"/>
    <property type="project" value="UniProtKB-SubCell"/>
</dbReference>
<dbReference type="GO" id="GO:0005525">
    <property type="term" value="F:GTP binding"/>
    <property type="evidence" value="ECO:0007669"/>
    <property type="project" value="UniProtKB-UniRule"/>
</dbReference>
<dbReference type="GO" id="GO:0003924">
    <property type="term" value="F:GTPase activity"/>
    <property type="evidence" value="ECO:0007669"/>
    <property type="project" value="InterPro"/>
</dbReference>
<dbReference type="GO" id="GO:0097216">
    <property type="term" value="F:guanosine tetraphosphate binding"/>
    <property type="evidence" value="ECO:0007669"/>
    <property type="project" value="UniProtKB-ARBA"/>
</dbReference>
<dbReference type="GO" id="GO:0003746">
    <property type="term" value="F:translation elongation factor activity"/>
    <property type="evidence" value="ECO:0007669"/>
    <property type="project" value="UniProtKB-UniRule"/>
</dbReference>
<dbReference type="CDD" id="cd01884">
    <property type="entry name" value="EF_Tu"/>
    <property type="match status" value="1"/>
</dbReference>
<dbReference type="CDD" id="cd03697">
    <property type="entry name" value="EFTU_II"/>
    <property type="match status" value="1"/>
</dbReference>
<dbReference type="CDD" id="cd03707">
    <property type="entry name" value="EFTU_III"/>
    <property type="match status" value="1"/>
</dbReference>
<dbReference type="FunFam" id="2.40.30.10:FF:000001">
    <property type="entry name" value="Elongation factor Tu"/>
    <property type="match status" value="1"/>
</dbReference>
<dbReference type="FunFam" id="3.40.50.300:FF:000003">
    <property type="entry name" value="Elongation factor Tu"/>
    <property type="match status" value="1"/>
</dbReference>
<dbReference type="Gene3D" id="3.40.50.300">
    <property type="entry name" value="P-loop containing nucleotide triphosphate hydrolases"/>
    <property type="match status" value="1"/>
</dbReference>
<dbReference type="Gene3D" id="2.40.30.10">
    <property type="entry name" value="Translation factors"/>
    <property type="match status" value="2"/>
</dbReference>
<dbReference type="HAMAP" id="MF_00118_B">
    <property type="entry name" value="EF_Tu_B"/>
    <property type="match status" value="1"/>
</dbReference>
<dbReference type="InterPro" id="IPR041709">
    <property type="entry name" value="EF-Tu_GTP-bd"/>
</dbReference>
<dbReference type="InterPro" id="IPR050055">
    <property type="entry name" value="EF-Tu_GTPase"/>
</dbReference>
<dbReference type="InterPro" id="IPR004161">
    <property type="entry name" value="EFTu-like_2"/>
</dbReference>
<dbReference type="InterPro" id="IPR033720">
    <property type="entry name" value="EFTU_2"/>
</dbReference>
<dbReference type="InterPro" id="IPR031157">
    <property type="entry name" value="G_TR_CS"/>
</dbReference>
<dbReference type="InterPro" id="IPR027417">
    <property type="entry name" value="P-loop_NTPase"/>
</dbReference>
<dbReference type="InterPro" id="IPR005225">
    <property type="entry name" value="Small_GTP-bd"/>
</dbReference>
<dbReference type="InterPro" id="IPR000795">
    <property type="entry name" value="T_Tr_GTP-bd_dom"/>
</dbReference>
<dbReference type="InterPro" id="IPR009000">
    <property type="entry name" value="Transl_B-barrel_sf"/>
</dbReference>
<dbReference type="InterPro" id="IPR009001">
    <property type="entry name" value="Transl_elong_EF1A/Init_IF2_C"/>
</dbReference>
<dbReference type="InterPro" id="IPR004541">
    <property type="entry name" value="Transl_elong_EFTu/EF1A_bac/org"/>
</dbReference>
<dbReference type="InterPro" id="IPR004160">
    <property type="entry name" value="Transl_elong_EFTu/EF1A_C"/>
</dbReference>
<dbReference type="NCBIfam" id="TIGR00485">
    <property type="entry name" value="EF-Tu"/>
    <property type="match status" value="1"/>
</dbReference>
<dbReference type="NCBIfam" id="NF000766">
    <property type="entry name" value="PRK00049.1"/>
    <property type="match status" value="1"/>
</dbReference>
<dbReference type="NCBIfam" id="NF009372">
    <property type="entry name" value="PRK12735.1"/>
    <property type="match status" value="1"/>
</dbReference>
<dbReference type="NCBIfam" id="NF009373">
    <property type="entry name" value="PRK12736.1"/>
    <property type="match status" value="1"/>
</dbReference>
<dbReference type="NCBIfam" id="TIGR00231">
    <property type="entry name" value="small_GTP"/>
    <property type="match status" value="1"/>
</dbReference>
<dbReference type="PANTHER" id="PTHR43721:SF22">
    <property type="entry name" value="ELONGATION FACTOR TU, MITOCHONDRIAL"/>
    <property type="match status" value="1"/>
</dbReference>
<dbReference type="PANTHER" id="PTHR43721">
    <property type="entry name" value="ELONGATION FACTOR TU-RELATED"/>
    <property type="match status" value="1"/>
</dbReference>
<dbReference type="Pfam" id="PF00009">
    <property type="entry name" value="GTP_EFTU"/>
    <property type="match status" value="1"/>
</dbReference>
<dbReference type="Pfam" id="PF03144">
    <property type="entry name" value="GTP_EFTU_D2"/>
    <property type="match status" value="1"/>
</dbReference>
<dbReference type="Pfam" id="PF03143">
    <property type="entry name" value="GTP_EFTU_D3"/>
    <property type="match status" value="1"/>
</dbReference>
<dbReference type="PRINTS" id="PR00315">
    <property type="entry name" value="ELONGATNFCT"/>
</dbReference>
<dbReference type="SUPFAM" id="SSF50465">
    <property type="entry name" value="EF-Tu/eEF-1alpha/eIF2-gamma C-terminal domain"/>
    <property type="match status" value="1"/>
</dbReference>
<dbReference type="SUPFAM" id="SSF52540">
    <property type="entry name" value="P-loop containing nucleoside triphosphate hydrolases"/>
    <property type="match status" value="1"/>
</dbReference>
<dbReference type="SUPFAM" id="SSF50447">
    <property type="entry name" value="Translation proteins"/>
    <property type="match status" value="1"/>
</dbReference>
<dbReference type="PROSITE" id="PS00301">
    <property type="entry name" value="G_TR_1"/>
    <property type="match status" value="1"/>
</dbReference>
<dbReference type="PROSITE" id="PS51722">
    <property type="entry name" value="G_TR_2"/>
    <property type="match status" value="1"/>
</dbReference>
<proteinExistence type="inferred from homology"/>
<protein>
    <recommendedName>
        <fullName evidence="2">Elongation factor Tu</fullName>
        <shortName evidence="2">EF-Tu</shortName>
        <ecNumber evidence="2">3.6.5.3</ecNumber>
    </recommendedName>
</protein>
<reference key="1">
    <citation type="journal article" date="2002" name="Nature">
        <title>Genome sequence of the plant pathogen Ralstonia solanacearum.</title>
        <authorList>
            <person name="Salanoubat M."/>
            <person name="Genin S."/>
            <person name="Artiguenave F."/>
            <person name="Gouzy J."/>
            <person name="Mangenot S."/>
            <person name="Arlat M."/>
            <person name="Billault A."/>
            <person name="Brottier P."/>
            <person name="Camus J.-C."/>
            <person name="Cattolico L."/>
            <person name="Chandler M."/>
            <person name="Choisne N."/>
            <person name="Claudel-Renard C."/>
            <person name="Cunnac S."/>
            <person name="Demange N."/>
            <person name="Gaspin C."/>
            <person name="Lavie M."/>
            <person name="Moisan A."/>
            <person name="Robert C."/>
            <person name="Saurin W."/>
            <person name="Schiex T."/>
            <person name="Siguier P."/>
            <person name="Thebault P."/>
            <person name="Whalen M."/>
            <person name="Wincker P."/>
            <person name="Levy M."/>
            <person name="Weissenbach J."/>
            <person name="Boucher C.A."/>
        </authorList>
    </citation>
    <scope>NUCLEOTIDE SEQUENCE [LARGE SCALE GENOMIC DNA]</scope>
    <source>
        <strain>ATCC BAA-1114 / GMI1000</strain>
    </source>
</reference>
<feature type="chain" id="PRO_0000091369" description="Elongation factor Tu">
    <location>
        <begin position="1"/>
        <end position="396"/>
    </location>
</feature>
<feature type="domain" description="tr-type G">
    <location>
        <begin position="10"/>
        <end position="206"/>
    </location>
</feature>
<feature type="region of interest" description="G1" evidence="1">
    <location>
        <begin position="19"/>
        <end position="26"/>
    </location>
</feature>
<feature type="region of interest" description="G2" evidence="1">
    <location>
        <begin position="60"/>
        <end position="64"/>
    </location>
</feature>
<feature type="region of interest" description="G3" evidence="1">
    <location>
        <begin position="81"/>
        <end position="84"/>
    </location>
</feature>
<feature type="region of interest" description="G4" evidence="1">
    <location>
        <begin position="136"/>
        <end position="139"/>
    </location>
</feature>
<feature type="region of interest" description="G5" evidence="1">
    <location>
        <begin position="174"/>
        <end position="176"/>
    </location>
</feature>
<feature type="binding site" evidence="2">
    <location>
        <begin position="19"/>
        <end position="26"/>
    </location>
    <ligand>
        <name>GTP</name>
        <dbReference type="ChEBI" id="CHEBI:37565"/>
    </ligand>
</feature>
<feature type="binding site" evidence="2">
    <location>
        <position position="26"/>
    </location>
    <ligand>
        <name>Mg(2+)</name>
        <dbReference type="ChEBI" id="CHEBI:18420"/>
    </ligand>
</feature>
<feature type="binding site" evidence="2">
    <location>
        <begin position="81"/>
        <end position="85"/>
    </location>
    <ligand>
        <name>GTP</name>
        <dbReference type="ChEBI" id="CHEBI:37565"/>
    </ligand>
</feature>
<feature type="binding site" evidence="2">
    <location>
        <begin position="136"/>
        <end position="139"/>
    </location>
    <ligand>
        <name>GTP</name>
        <dbReference type="ChEBI" id="CHEBI:37565"/>
    </ligand>
</feature>
<keyword id="KW-0963">Cytoplasm</keyword>
<keyword id="KW-0251">Elongation factor</keyword>
<keyword id="KW-0342">GTP-binding</keyword>
<keyword id="KW-0378">Hydrolase</keyword>
<keyword id="KW-0460">Magnesium</keyword>
<keyword id="KW-0479">Metal-binding</keyword>
<keyword id="KW-0547">Nucleotide-binding</keyword>
<keyword id="KW-0648">Protein biosynthesis</keyword>
<keyword id="KW-1185">Reference proteome</keyword>
<sequence length="396" mass="43167">MAKEKFERTKPHVNVGTIGHVDHGKTTLTAAIATVLSSKFGGEAKKYDEIDAAPEEKARGITINTAHIEYETANRHYAHVDCPGHADYVKNMITGAAQMDGAILVCSAADGPMPQTREHILLARQVGVPYIIVFLNKCDMVDDAELLELVEMEVRELLSKYDFPGDDTPIIKGSAKLALEGDKGELGEVAIMNLADALDSYIPTPERAVDGTFLMPVEDVFSISGRGTVVTGRIERGIIKVGEEIEIVGIKATQKTTCTGVEMFRKLLDQGQAGDNVGILLRGTKREDVERGQVLCKPGSIKPHTHFTGEVYILSKDEGGRHTPFFNNYRPQFYFRTTDVTGSIELPKDKEMVMPGDNVSITVKLIAPIAMEEGLRFAIREGGRTVGAGVVAKIIE</sequence>
<name>EFTU_RALN1</name>
<gene>
    <name evidence="2" type="primary">tufA</name>
    <name type="synonym">tuf1</name>
    <name type="ordered locus">RSc3021</name>
    <name type="ORF">RS06071</name>
</gene>
<gene>
    <name evidence="2" type="primary">tufB</name>
    <name type="synonym">tuf2</name>
    <name type="ordered locus">RSc3041</name>
    <name type="ORF">RS04716</name>
</gene>